<keyword id="KW-0460">Magnesium</keyword>
<keyword id="KW-0479">Metal-binding</keyword>
<keyword id="KW-1185">Reference proteome</keyword>
<keyword id="KW-0808">Transferase</keyword>
<reference key="1">
    <citation type="journal article" date="2003" name="Nature">
        <title>Genome sequence of Bacillus cereus and comparative analysis with Bacillus anthracis.</title>
        <authorList>
            <person name="Ivanova N."/>
            <person name="Sorokin A."/>
            <person name="Anderson I."/>
            <person name="Galleron N."/>
            <person name="Candelon B."/>
            <person name="Kapatral V."/>
            <person name="Bhattacharyya A."/>
            <person name="Reznik G."/>
            <person name="Mikhailova N."/>
            <person name="Lapidus A."/>
            <person name="Chu L."/>
            <person name="Mazur M."/>
            <person name="Goltsman E."/>
            <person name="Larsen N."/>
            <person name="D'Souza M."/>
            <person name="Walunas T."/>
            <person name="Grechkin Y."/>
            <person name="Pusch G."/>
            <person name="Haselkorn R."/>
            <person name="Fonstein M."/>
            <person name="Ehrlich S.D."/>
            <person name="Overbeek R."/>
            <person name="Kyrpides N.C."/>
        </authorList>
    </citation>
    <scope>NUCLEOTIDE SEQUENCE [LARGE SCALE GENOMIC DNA]</scope>
    <source>
        <strain>ATCC 14579 / DSM 31 / CCUG 7414 / JCM 2152 / NBRC 15305 / NCIMB 9373 / NCTC 2599 / NRRL B-3711</strain>
    </source>
</reference>
<organism>
    <name type="scientific">Bacillus cereus (strain ATCC 14579 / DSM 31 / CCUG 7414 / JCM 2152 / NBRC 15305 / NCIMB 9373 / NCTC 2599 / NRRL B-3711)</name>
    <dbReference type="NCBI Taxonomy" id="226900"/>
    <lineage>
        <taxon>Bacteria</taxon>
        <taxon>Bacillati</taxon>
        <taxon>Bacillota</taxon>
        <taxon>Bacilli</taxon>
        <taxon>Bacillales</taxon>
        <taxon>Bacillaceae</taxon>
        <taxon>Bacillus</taxon>
        <taxon>Bacillus cereus group</taxon>
    </lineage>
</organism>
<evidence type="ECO:0000255" key="1">
    <source>
        <dbReference type="HAMAP-Rule" id="MF_01139"/>
    </source>
</evidence>
<protein>
    <recommendedName>
        <fullName evidence="1">Isoprenyl transferase</fullName>
        <ecNumber evidence="1">2.5.1.-</ecNumber>
    </recommendedName>
</protein>
<sequence>MMFKNFPFFKGKKDTSFDHLVEEVKKGYIPEHIAIIMDGNGRWAKRRAMPRIAGHHEGMQVVKKITKFASKLNVKVLTLYAFSTENWKRPKKEVDYLMKLPEEFLGTFLPELIEENVQVRVIGQKDRLPTHTRRAMEKAMEDTKENTGLILNFALNYGSRDEIVSAVQHMMKDNEEGKIRSEEVSEEMLSSYLMTSSLPDPELLIRTSGELRISNFMLWQIAYSEFWFTDVYWPDFKEEHLLNAITDFQHRGRRFGGV</sequence>
<name>ISPT_BACCR</name>
<proteinExistence type="inferred from homology"/>
<gene>
    <name evidence="1" type="primary">uppS</name>
    <name type="ordered locus">BC_3821</name>
</gene>
<accession>Q819Y1</accession>
<feature type="chain" id="PRO_0000123568" description="Isoprenyl transferase">
    <location>
        <begin position="1"/>
        <end position="258"/>
    </location>
</feature>
<feature type="active site" evidence="1">
    <location>
        <position position="38"/>
    </location>
</feature>
<feature type="active site" description="Proton acceptor" evidence="1">
    <location>
        <position position="86"/>
    </location>
</feature>
<feature type="binding site" evidence="1">
    <location>
        <position position="38"/>
    </location>
    <ligand>
        <name>Mg(2+)</name>
        <dbReference type="ChEBI" id="CHEBI:18420"/>
    </ligand>
</feature>
<feature type="binding site" evidence="1">
    <location>
        <begin position="39"/>
        <end position="42"/>
    </location>
    <ligand>
        <name>substrate</name>
    </ligand>
</feature>
<feature type="binding site" evidence="1">
    <location>
        <position position="43"/>
    </location>
    <ligand>
        <name>substrate</name>
    </ligand>
</feature>
<feature type="binding site" evidence="1">
    <location>
        <position position="51"/>
    </location>
    <ligand>
        <name>substrate</name>
    </ligand>
</feature>
<feature type="binding site" evidence="1">
    <location>
        <position position="55"/>
    </location>
    <ligand>
        <name>substrate</name>
    </ligand>
</feature>
<feature type="binding site" evidence="1">
    <location>
        <begin position="83"/>
        <end position="85"/>
    </location>
    <ligand>
        <name>substrate</name>
    </ligand>
</feature>
<feature type="binding site" evidence="1">
    <location>
        <position position="87"/>
    </location>
    <ligand>
        <name>substrate</name>
    </ligand>
</feature>
<feature type="binding site" evidence="1">
    <location>
        <position position="89"/>
    </location>
    <ligand>
        <name>substrate</name>
    </ligand>
</feature>
<feature type="binding site" evidence="1">
    <location>
        <position position="206"/>
    </location>
    <ligand>
        <name>substrate</name>
    </ligand>
</feature>
<feature type="binding site" evidence="1">
    <location>
        <begin position="212"/>
        <end position="214"/>
    </location>
    <ligand>
        <name>substrate</name>
    </ligand>
</feature>
<feature type="binding site" evidence="1">
    <location>
        <position position="225"/>
    </location>
    <ligand>
        <name>Mg(2+)</name>
        <dbReference type="ChEBI" id="CHEBI:18420"/>
    </ligand>
</feature>
<comment type="function">
    <text evidence="1">Catalyzes the condensation of isopentenyl diphosphate (IPP) with allylic pyrophosphates generating different type of terpenoids.</text>
</comment>
<comment type="cofactor">
    <cofactor evidence="1">
        <name>Mg(2+)</name>
        <dbReference type="ChEBI" id="CHEBI:18420"/>
    </cofactor>
    <text evidence="1">Binds 2 magnesium ions per subunit.</text>
</comment>
<comment type="subunit">
    <text evidence="1">Homodimer.</text>
</comment>
<comment type="similarity">
    <text evidence="1">Belongs to the UPP synthase family.</text>
</comment>
<dbReference type="EC" id="2.5.1.-" evidence="1"/>
<dbReference type="EMBL" id="AE016877">
    <property type="protein sequence ID" value="AAP10743.1"/>
    <property type="molecule type" value="Genomic_DNA"/>
</dbReference>
<dbReference type="RefSeq" id="NP_833542.1">
    <property type="nucleotide sequence ID" value="NC_004722.1"/>
</dbReference>
<dbReference type="RefSeq" id="WP_000971296.1">
    <property type="nucleotide sequence ID" value="NZ_CP138336.1"/>
</dbReference>
<dbReference type="SMR" id="Q819Y1"/>
<dbReference type="STRING" id="226900.BC_3821"/>
<dbReference type="KEGG" id="bce:BC3821"/>
<dbReference type="PATRIC" id="fig|226900.8.peg.3940"/>
<dbReference type="HOGENOM" id="CLU_038505_1_1_9"/>
<dbReference type="OrthoDB" id="4191603at2"/>
<dbReference type="Proteomes" id="UP000001417">
    <property type="component" value="Chromosome"/>
</dbReference>
<dbReference type="GO" id="GO:0005829">
    <property type="term" value="C:cytosol"/>
    <property type="evidence" value="ECO:0000318"/>
    <property type="project" value="GO_Central"/>
</dbReference>
<dbReference type="GO" id="GO:0008834">
    <property type="term" value="F:ditrans,polycis-undecaprenyl-diphosphate synthase [(2E,6E)-farnesyl-diphosphate specific] activity"/>
    <property type="evidence" value="ECO:0000318"/>
    <property type="project" value="GO_Central"/>
</dbReference>
<dbReference type="GO" id="GO:0000287">
    <property type="term" value="F:magnesium ion binding"/>
    <property type="evidence" value="ECO:0000318"/>
    <property type="project" value="GO_Central"/>
</dbReference>
<dbReference type="GO" id="GO:0030145">
    <property type="term" value="F:manganese ion binding"/>
    <property type="evidence" value="ECO:0000318"/>
    <property type="project" value="GO_Central"/>
</dbReference>
<dbReference type="GO" id="GO:0016094">
    <property type="term" value="P:polyprenol biosynthetic process"/>
    <property type="evidence" value="ECO:0000318"/>
    <property type="project" value="GO_Central"/>
</dbReference>
<dbReference type="CDD" id="cd00475">
    <property type="entry name" value="Cis_IPPS"/>
    <property type="match status" value="1"/>
</dbReference>
<dbReference type="FunFam" id="3.40.1180.10:FF:000001">
    <property type="entry name" value="(2E,6E)-farnesyl-diphosphate-specific ditrans,polycis-undecaprenyl-diphosphate synthase"/>
    <property type="match status" value="1"/>
</dbReference>
<dbReference type="Gene3D" id="3.40.1180.10">
    <property type="entry name" value="Decaprenyl diphosphate synthase-like"/>
    <property type="match status" value="1"/>
</dbReference>
<dbReference type="HAMAP" id="MF_01139">
    <property type="entry name" value="ISPT"/>
    <property type="match status" value="1"/>
</dbReference>
<dbReference type="InterPro" id="IPR001441">
    <property type="entry name" value="UPP_synth-like"/>
</dbReference>
<dbReference type="InterPro" id="IPR018520">
    <property type="entry name" value="UPP_synth-like_CS"/>
</dbReference>
<dbReference type="InterPro" id="IPR036424">
    <property type="entry name" value="UPP_synth-like_sf"/>
</dbReference>
<dbReference type="NCBIfam" id="NF011405">
    <property type="entry name" value="PRK14830.1"/>
    <property type="match status" value="1"/>
</dbReference>
<dbReference type="NCBIfam" id="TIGR00055">
    <property type="entry name" value="uppS"/>
    <property type="match status" value="1"/>
</dbReference>
<dbReference type="PANTHER" id="PTHR10291:SF0">
    <property type="entry name" value="DEHYDRODOLICHYL DIPHOSPHATE SYNTHASE 2"/>
    <property type="match status" value="1"/>
</dbReference>
<dbReference type="PANTHER" id="PTHR10291">
    <property type="entry name" value="DEHYDRODOLICHYL DIPHOSPHATE SYNTHASE FAMILY MEMBER"/>
    <property type="match status" value="1"/>
</dbReference>
<dbReference type="Pfam" id="PF01255">
    <property type="entry name" value="Prenyltransf"/>
    <property type="match status" value="1"/>
</dbReference>
<dbReference type="SUPFAM" id="SSF64005">
    <property type="entry name" value="Undecaprenyl diphosphate synthase"/>
    <property type="match status" value="1"/>
</dbReference>
<dbReference type="PROSITE" id="PS01066">
    <property type="entry name" value="UPP_SYNTHASE"/>
    <property type="match status" value="1"/>
</dbReference>